<comment type="function">
    <text evidence="1">One of the essential components for the initiation of protein synthesis. Stabilizes the binding of IF-2 and IF-3 on the 30S subunit to which N-formylmethionyl-tRNA(fMet) subsequently binds. Helps modulate mRNA selection, yielding the 30S pre-initiation complex (PIC). Upon addition of the 50S ribosomal subunit IF-1, IF-2 and IF-3 are released leaving the mature 70S translation initiation complex.</text>
</comment>
<comment type="subunit">
    <text evidence="1">Component of the 30S ribosomal translation pre-initiation complex which assembles on the 30S ribosome in the order IF-2 and IF-3, IF-1 and N-formylmethionyl-tRNA(fMet); mRNA recruitment can occur at any time during PIC assembly.</text>
</comment>
<comment type="subcellular location">
    <subcellularLocation>
        <location evidence="1">Cytoplasm</location>
    </subcellularLocation>
</comment>
<comment type="similarity">
    <text evidence="1">Belongs to the IF-1 family.</text>
</comment>
<sequence>MSKQDLIEMEGTVTESLPNAMFRVDLDNGFNVLAHISGKIRRNYIKILPGDRVKVELTPYDLTKGRITYRLRKK</sequence>
<accession>Q3MFA1</accession>
<evidence type="ECO:0000255" key="1">
    <source>
        <dbReference type="HAMAP-Rule" id="MF_00075"/>
    </source>
</evidence>
<dbReference type="EMBL" id="CP000117">
    <property type="protein sequence ID" value="ABA20335.1"/>
    <property type="molecule type" value="Genomic_DNA"/>
</dbReference>
<dbReference type="RefSeq" id="WP_006276978.1">
    <property type="nucleotide sequence ID" value="NC_007413.1"/>
</dbReference>
<dbReference type="SMR" id="Q3MFA1"/>
<dbReference type="STRING" id="240292.Ava_0711"/>
<dbReference type="GeneID" id="92781360"/>
<dbReference type="KEGG" id="ava:Ava_0711"/>
<dbReference type="eggNOG" id="COG0361">
    <property type="taxonomic scope" value="Bacteria"/>
</dbReference>
<dbReference type="HOGENOM" id="CLU_151267_1_0_3"/>
<dbReference type="Proteomes" id="UP000002533">
    <property type="component" value="Chromosome"/>
</dbReference>
<dbReference type="GO" id="GO:0005829">
    <property type="term" value="C:cytosol"/>
    <property type="evidence" value="ECO:0007669"/>
    <property type="project" value="TreeGrafter"/>
</dbReference>
<dbReference type="GO" id="GO:0043022">
    <property type="term" value="F:ribosome binding"/>
    <property type="evidence" value="ECO:0007669"/>
    <property type="project" value="UniProtKB-UniRule"/>
</dbReference>
<dbReference type="GO" id="GO:0019843">
    <property type="term" value="F:rRNA binding"/>
    <property type="evidence" value="ECO:0007669"/>
    <property type="project" value="UniProtKB-UniRule"/>
</dbReference>
<dbReference type="GO" id="GO:0003743">
    <property type="term" value="F:translation initiation factor activity"/>
    <property type="evidence" value="ECO:0007669"/>
    <property type="project" value="UniProtKB-UniRule"/>
</dbReference>
<dbReference type="CDD" id="cd04451">
    <property type="entry name" value="S1_IF1"/>
    <property type="match status" value="1"/>
</dbReference>
<dbReference type="FunFam" id="2.40.50.140:FF:000002">
    <property type="entry name" value="Translation initiation factor IF-1"/>
    <property type="match status" value="1"/>
</dbReference>
<dbReference type="Gene3D" id="2.40.50.140">
    <property type="entry name" value="Nucleic acid-binding proteins"/>
    <property type="match status" value="1"/>
</dbReference>
<dbReference type="HAMAP" id="MF_00075">
    <property type="entry name" value="IF_1"/>
    <property type="match status" value="1"/>
</dbReference>
<dbReference type="InterPro" id="IPR012340">
    <property type="entry name" value="NA-bd_OB-fold"/>
</dbReference>
<dbReference type="InterPro" id="IPR006196">
    <property type="entry name" value="RNA-binding_domain_S1_IF1"/>
</dbReference>
<dbReference type="InterPro" id="IPR003029">
    <property type="entry name" value="S1_domain"/>
</dbReference>
<dbReference type="InterPro" id="IPR004368">
    <property type="entry name" value="TIF_IF1"/>
</dbReference>
<dbReference type="NCBIfam" id="TIGR00008">
    <property type="entry name" value="infA"/>
    <property type="match status" value="1"/>
</dbReference>
<dbReference type="PANTHER" id="PTHR33370">
    <property type="entry name" value="TRANSLATION INITIATION FACTOR IF-1, CHLOROPLASTIC"/>
    <property type="match status" value="1"/>
</dbReference>
<dbReference type="PANTHER" id="PTHR33370:SF1">
    <property type="entry name" value="TRANSLATION INITIATION FACTOR IF-1, CHLOROPLASTIC"/>
    <property type="match status" value="1"/>
</dbReference>
<dbReference type="Pfam" id="PF01176">
    <property type="entry name" value="eIF-1a"/>
    <property type="match status" value="1"/>
</dbReference>
<dbReference type="SMART" id="SM00316">
    <property type="entry name" value="S1"/>
    <property type="match status" value="1"/>
</dbReference>
<dbReference type="SUPFAM" id="SSF50249">
    <property type="entry name" value="Nucleic acid-binding proteins"/>
    <property type="match status" value="1"/>
</dbReference>
<dbReference type="PROSITE" id="PS50832">
    <property type="entry name" value="S1_IF1_TYPE"/>
    <property type="match status" value="1"/>
</dbReference>
<organism>
    <name type="scientific">Trichormus variabilis (strain ATCC 29413 / PCC 7937)</name>
    <name type="common">Anabaena variabilis</name>
    <dbReference type="NCBI Taxonomy" id="240292"/>
    <lineage>
        <taxon>Bacteria</taxon>
        <taxon>Bacillati</taxon>
        <taxon>Cyanobacteriota</taxon>
        <taxon>Cyanophyceae</taxon>
        <taxon>Nostocales</taxon>
        <taxon>Nostocaceae</taxon>
        <taxon>Trichormus</taxon>
    </lineage>
</organism>
<proteinExistence type="inferred from homology"/>
<reference key="1">
    <citation type="journal article" date="2014" name="Stand. Genomic Sci.">
        <title>Complete genome sequence of Anabaena variabilis ATCC 29413.</title>
        <authorList>
            <person name="Thiel T."/>
            <person name="Pratte B.S."/>
            <person name="Zhong J."/>
            <person name="Goodwin L."/>
            <person name="Copeland A."/>
            <person name="Lucas S."/>
            <person name="Han C."/>
            <person name="Pitluck S."/>
            <person name="Land M.L."/>
            <person name="Kyrpides N.C."/>
            <person name="Woyke T."/>
        </authorList>
    </citation>
    <scope>NUCLEOTIDE SEQUENCE [LARGE SCALE GENOMIC DNA]</scope>
    <source>
        <strain>ATCC 29413 / PCC 7937</strain>
    </source>
</reference>
<keyword id="KW-0963">Cytoplasm</keyword>
<keyword id="KW-0396">Initiation factor</keyword>
<keyword id="KW-0648">Protein biosynthesis</keyword>
<keyword id="KW-0694">RNA-binding</keyword>
<keyword id="KW-0699">rRNA-binding</keyword>
<feature type="chain" id="PRO_0000263760" description="Translation initiation factor IF-1">
    <location>
        <begin position="1"/>
        <end position="74"/>
    </location>
</feature>
<feature type="domain" description="S1-like" evidence="1">
    <location>
        <begin position="1"/>
        <end position="72"/>
    </location>
</feature>
<protein>
    <recommendedName>
        <fullName evidence="1">Translation initiation factor IF-1</fullName>
    </recommendedName>
</protein>
<name>IF1_TRIV2</name>
<gene>
    <name evidence="1" type="primary">infA</name>
    <name type="ordered locus">Ava_0711</name>
</gene>